<name>MDTI_SALNS</name>
<gene>
    <name evidence="1" type="primary">mdtI</name>
    <name type="ordered locus">SNSL254_A1593</name>
</gene>
<feature type="chain" id="PRO_1000197323" description="Spermidine export protein MdtI">
    <location>
        <begin position="1"/>
        <end position="109"/>
    </location>
</feature>
<feature type="transmembrane region" description="Helical" evidence="1">
    <location>
        <begin position="6"/>
        <end position="26"/>
    </location>
</feature>
<feature type="transmembrane region" description="Helical" evidence="1">
    <location>
        <begin position="36"/>
        <end position="56"/>
    </location>
</feature>
<feature type="transmembrane region" description="Helical" evidence="1">
    <location>
        <begin position="64"/>
        <end position="84"/>
    </location>
</feature>
<feature type="transmembrane region" description="Helical" evidence="1">
    <location>
        <begin position="88"/>
        <end position="108"/>
    </location>
</feature>
<sequence>MQQFEWIHGAWLGLAIMLEIAANVLLKFSDGFRRKCYGILSLAAVLAAFSALSQAVKGIDLSVAYALWGGFGIAATLAAGWVLFGQRLNPKGWVGVILLLAGMVMIKFA</sequence>
<comment type="function">
    <text evidence="1">Catalyzes the excretion of spermidine.</text>
</comment>
<comment type="subunit">
    <text evidence="1">Forms a complex with MdtJ.</text>
</comment>
<comment type="subcellular location">
    <subcellularLocation>
        <location evidence="1">Cell inner membrane</location>
        <topology evidence="1">Multi-pass membrane protein</topology>
    </subcellularLocation>
</comment>
<comment type="similarity">
    <text evidence="1">Belongs to the drug/metabolite transporter (DMT) superfamily. Small multidrug resistance (SMR) (TC 2.A.7.1) family. MdtI subfamily.</text>
</comment>
<reference key="1">
    <citation type="journal article" date="2011" name="J. Bacteriol.">
        <title>Comparative genomics of 28 Salmonella enterica isolates: evidence for CRISPR-mediated adaptive sublineage evolution.</title>
        <authorList>
            <person name="Fricke W.F."/>
            <person name="Mammel M.K."/>
            <person name="McDermott P.F."/>
            <person name="Tartera C."/>
            <person name="White D.G."/>
            <person name="Leclerc J.E."/>
            <person name="Ravel J."/>
            <person name="Cebula T.A."/>
        </authorList>
    </citation>
    <scope>NUCLEOTIDE SEQUENCE [LARGE SCALE GENOMIC DNA]</scope>
    <source>
        <strain>SL254</strain>
    </source>
</reference>
<protein>
    <recommendedName>
        <fullName evidence="1">Spermidine export protein MdtI</fullName>
    </recommendedName>
</protein>
<accession>B4T5B9</accession>
<organism>
    <name type="scientific">Salmonella newport (strain SL254)</name>
    <dbReference type="NCBI Taxonomy" id="423368"/>
    <lineage>
        <taxon>Bacteria</taxon>
        <taxon>Pseudomonadati</taxon>
        <taxon>Pseudomonadota</taxon>
        <taxon>Gammaproteobacteria</taxon>
        <taxon>Enterobacterales</taxon>
        <taxon>Enterobacteriaceae</taxon>
        <taxon>Salmonella</taxon>
    </lineage>
</organism>
<proteinExistence type="inferred from homology"/>
<evidence type="ECO:0000255" key="1">
    <source>
        <dbReference type="HAMAP-Rule" id="MF_01597"/>
    </source>
</evidence>
<dbReference type="EMBL" id="CP001113">
    <property type="protein sequence ID" value="ACF64359.1"/>
    <property type="molecule type" value="Genomic_DNA"/>
</dbReference>
<dbReference type="RefSeq" id="WP_001183821.1">
    <property type="nucleotide sequence ID" value="NZ_CCMR01000003.1"/>
</dbReference>
<dbReference type="SMR" id="B4T5B9"/>
<dbReference type="KEGG" id="see:SNSL254_A1593"/>
<dbReference type="HOGENOM" id="CLU_133067_0_4_6"/>
<dbReference type="Proteomes" id="UP000008824">
    <property type="component" value="Chromosome"/>
</dbReference>
<dbReference type="GO" id="GO:0005886">
    <property type="term" value="C:plasma membrane"/>
    <property type="evidence" value="ECO:0007669"/>
    <property type="project" value="UniProtKB-SubCell"/>
</dbReference>
<dbReference type="GO" id="GO:0015199">
    <property type="term" value="F:amino-acid betaine transmembrane transporter activity"/>
    <property type="evidence" value="ECO:0007669"/>
    <property type="project" value="TreeGrafter"/>
</dbReference>
<dbReference type="GO" id="GO:0015297">
    <property type="term" value="F:antiporter activity"/>
    <property type="evidence" value="ECO:0007669"/>
    <property type="project" value="TreeGrafter"/>
</dbReference>
<dbReference type="GO" id="GO:0015220">
    <property type="term" value="F:choline transmembrane transporter activity"/>
    <property type="evidence" value="ECO:0007669"/>
    <property type="project" value="TreeGrafter"/>
</dbReference>
<dbReference type="GO" id="GO:0015606">
    <property type="term" value="F:spermidine transmembrane transporter activity"/>
    <property type="evidence" value="ECO:0007669"/>
    <property type="project" value="UniProtKB-UniRule"/>
</dbReference>
<dbReference type="GO" id="GO:0031460">
    <property type="term" value="P:glycine betaine transport"/>
    <property type="evidence" value="ECO:0007669"/>
    <property type="project" value="TreeGrafter"/>
</dbReference>
<dbReference type="FunFam" id="1.10.3730.20:FF:000001">
    <property type="entry name" value="Quaternary ammonium compound resistance transporter SugE"/>
    <property type="match status" value="1"/>
</dbReference>
<dbReference type="Gene3D" id="1.10.3730.20">
    <property type="match status" value="1"/>
</dbReference>
<dbReference type="HAMAP" id="MF_01597">
    <property type="entry name" value="MdtI"/>
    <property type="match status" value="1"/>
</dbReference>
<dbReference type="InterPro" id="IPR000390">
    <property type="entry name" value="Small_drug/metabolite_transptr"/>
</dbReference>
<dbReference type="InterPro" id="IPR045324">
    <property type="entry name" value="Small_multidrug_res"/>
</dbReference>
<dbReference type="InterPro" id="IPR023737">
    <property type="entry name" value="Spermidine_export_MdtI"/>
</dbReference>
<dbReference type="NCBIfam" id="NF007934">
    <property type="entry name" value="PRK10650.1"/>
    <property type="match status" value="1"/>
</dbReference>
<dbReference type="PANTHER" id="PTHR30561">
    <property type="entry name" value="SMR FAMILY PROTON-DEPENDENT DRUG EFFLUX TRANSPORTER SUGE"/>
    <property type="match status" value="1"/>
</dbReference>
<dbReference type="PANTHER" id="PTHR30561:SF6">
    <property type="entry name" value="SPERMIDINE EXPORT PROTEIN MDTI"/>
    <property type="match status" value="1"/>
</dbReference>
<dbReference type="Pfam" id="PF00893">
    <property type="entry name" value="Multi_Drug_Res"/>
    <property type="match status" value="1"/>
</dbReference>
<dbReference type="SUPFAM" id="SSF103481">
    <property type="entry name" value="Multidrug resistance efflux transporter EmrE"/>
    <property type="match status" value="1"/>
</dbReference>
<keyword id="KW-0997">Cell inner membrane</keyword>
<keyword id="KW-1003">Cell membrane</keyword>
<keyword id="KW-0472">Membrane</keyword>
<keyword id="KW-0812">Transmembrane</keyword>
<keyword id="KW-1133">Transmembrane helix</keyword>
<keyword id="KW-0813">Transport</keyword>